<keyword id="KW-0031">Aminopeptidase</keyword>
<keyword id="KW-0963">Cytoplasm</keyword>
<keyword id="KW-0378">Hydrolase</keyword>
<keyword id="KW-0479">Metal-binding</keyword>
<keyword id="KW-0645">Protease</keyword>
<keyword id="KW-1185">Reference proteome</keyword>
<keyword id="KW-0862">Zinc</keyword>
<keyword id="KW-0863">Zinc-finger</keyword>
<protein>
    <recommendedName>
        <fullName evidence="1">Methionine aminopeptidase 1</fullName>
        <shortName evidence="1">MAP 1</shortName>
        <shortName evidence="1">MetAP 1</shortName>
        <ecNumber evidence="1">3.4.11.18</ecNumber>
    </recommendedName>
    <alternativeName>
        <fullName evidence="1">Peptidase M 1</fullName>
    </alternativeName>
</protein>
<reference key="1">
    <citation type="journal article" date="2005" name="Nature">
        <title>The genome of the social amoeba Dictyostelium discoideum.</title>
        <authorList>
            <person name="Eichinger L."/>
            <person name="Pachebat J.A."/>
            <person name="Gloeckner G."/>
            <person name="Rajandream M.A."/>
            <person name="Sucgang R."/>
            <person name="Berriman M."/>
            <person name="Song J."/>
            <person name="Olsen R."/>
            <person name="Szafranski K."/>
            <person name="Xu Q."/>
            <person name="Tunggal B."/>
            <person name="Kummerfeld S."/>
            <person name="Madera M."/>
            <person name="Konfortov B.A."/>
            <person name="Rivero F."/>
            <person name="Bankier A.T."/>
            <person name="Lehmann R."/>
            <person name="Hamlin N."/>
            <person name="Davies R."/>
            <person name="Gaudet P."/>
            <person name="Fey P."/>
            <person name="Pilcher K."/>
            <person name="Chen G."/>
            <person name="Saunders D."/>
            <person name="Sodergren E.J."/>
            <person name="Davis P."/>
            <person name="Kerhornou A."/>
            <person name="Nie X."/>
            <person name="Hall N."/>
            <person name="Anjard C."/>
            <person name="Hemphill L."/>
            <person name="Bason N."/>
            <person name="Farbrother P."/>
            <person name="Desany B."/>
            <person name="Just E."/>
            <person name="Morio T."/>
            <person name="Rost R."/>
            <person name="Churcher C.M."/>
            <person name="Cooper J."/>
            <person name="Haydock S."/>
            <person name="van Driessche N."/>
            <person name="Cronin A."/>
            <person name="Goodhead I."/>
            <person name="Muzny D.M."/>
            <person name="Mourier T."/>
            <person name="Pain A."/>
            <person name="Lu M."/>
            <person name="Harper D."/>
            <person name="Lindsay R."/>
            <person name="Hauser H."/>
            <person name="James K.D."/>
            <person name="Quiles M."/>
            <person name="Madan Babu M."/>
            <person name="Saito T."/>
            <person name="Buchrieser C."/>
            <person name="Wardroper A."/>
            <person name="Felder M."/>
            <person name="Thangavelu M."/>
            <person name="Johnson D."/>
            <person name="Knights A."/>
            <person name="Loulseged H."/>
            <person name="Mungall K.L."/>
            <person name="Oliver K."/>
            <person name="Price C."/>
            <person name="Quail M.A."/>
            <person name="Urushihara H."/>
            <person name="Hernandez J."/>
            <person name="Rabbinowitsch E."/>
            <person name="Steffen D."/>
            <person name="Sanders M."/>
            <person name="Ma J."/>
            <person name="Kohara Y."/>
            <person name="Sharp S."/>
            <person name="Simmonds M.N."/>
            <person name="Spiegler S."/>
            <person name="Tivey A."/>
            <person name="Sugano S."/>
            <person name="White B."/>
            <person name="Walker D."/>
            <person name="Woodward J.R."/>
            <person name="Winckler T."/>
            <person name="Tanaka Y."/>
            <person name="Shaulsky G."/>
            <person name="Schleicher M."/>
            <person name="Weinstock G.M."/>
            <person name="Rosenthal A."/>
            <person name="Cox E.C."/>
            <person name="Chisholm R.L."/>
            <person name="Gibbs R.A."/>
            <person name="Loomis W.F."/>
            <person name="Platzer M."/>
            <person name="Kay R.R."/>
            <person name="Williams J.G."/>
            <person name="Dear P.H."/>
            <person name="Noegel A.A."/>
            <person name="Barrell B.G."/>
            <person name="Kuspa A."/>
        </authorList>
    </citation>
    <scope>NUCLEOTIDE SEQUENCE [LARGE SCALE GENOMIC DNA]</scope>
    <source>
        <strain>AX4</strain>
    </source>
</reference>
<accession>Q54WU3</accession>
<proteinExistence type="inferred from homology"/>
<name>MAP11_DICDI</name>
<sequence>MEGILCASPGCGKPAKLQCPTCVNLKLETPSHFCSQECFKTFWPLHKMYHQKGQPENLPSQFRNYKFTGPLRPTNITPMRKAPEGIELPDYAIGSIPISERVADRKNMANIIHTPEEIEIMRQLGKMSREVLDIAGNAAKVGMTTEELDIIVHNAVIERGAYPSPLNYYKFPKSCCTSLNEVICHGIPDERPLRDGDILNVDVTLYWKGFHSDLNETYLIGNVDERGKNLVKCAYDCLELAVAMCKPGTLYRELGDAIQKHANKQGFSVVKNFCGHGIGRLFHCNPTVPHYSKNKAVGAMKVGHVFTIEPMINEGTWQDEIWPDSWTAVTADGKRSAQFEHTLVITETGCEVLTKRTNGSYIDRHFK</sequence>
<organism>
    <name type="scientific">Dictyostelium discoideum</name>
    <name type="common">Social amoeba</name>
    <dbReference type="NCBI Taxonomy" id="44689"/>
    <lineage>
        <taxon>Eukaryota</taxon>
        <taxon>Amoebozoa</taxon>
        <taxon>Evosea</taxon>
        <taxon>Eumycetozoa</taxon>
        <taxon>Dictyostelia</taxon>
        <taxon>Dictyosteliales</taxon>
        <taxon>Dictyosteliaceae</taxon>
        <taxon>Dictyostelium</taxon>
    </lineage>
</organism>
<feature type="chain" id="PRO_0000328513" description="Methionine aminopeptidase 1">
    <location>
        <begin position="1"/>
        <end position="367"/>
    </location>
</feature>
<feature type="zinc finger region" description="C6H2-type" evidence="2">
    <location>
        <begin position="3"/>
        <end position="57"/>
    </location>
</feature>
<feature type="binding site" evidence="1">
    <location>
        <position position="6"/>
    </location>
    <ligand>
        <name>Zn(2+)</name>
        <dbReference type="ChEBI" id="CHEBI:29105"/>
        <label>1</label>
    </ligand>
</feature>
<feature type="binding site" evidence="1">
    <location>
        <position position="11"/>
    </location>
    <ligand>
        <name>Zn(2+)</name>
        <dbReference type="ChEBI" id="CHEBI:29105"/>
        <label>1</label>
    </ligand>
</feature>
<feature type="binding site" evidence="1">
    <location>
        <position position="19"/>
    </location>
    <ligand>
        <name>Zn(2+)</name>
        <dbReference type="ChEBI" id="CHEBI:29105"/>
        <label>2</label>
    </ligand>
</feature>
<feature type="binding site" evidence="1">
    <location>
        <position position="22"/>
    </location>
    <ligand>
        <name>Zn(2+)</name>
        <dbReference type="ChEBI" id="CHEBI:29105"/>
        <label>2</label>
    </ligand>
</feature>
<feature type="binding site" evidence="1">
    <location>
        <position position="34"/>
    </location>
    <ligand>
        <name>Zn(2+)</name>
        <dbReference type="ChEBI" id="CHEBI:29105"/>
        <label>1</label>
    </ligand>
</feature>
<feature type="binding site" evidence="1">
    <location>
        <position position="38"/>
    </location>
    <ligand>
        <name>Zn(2+)</name>
        <dbReference type="ChEBI" id="CHEBI:29105"/>
        <label>1</label>
    </ligand>
</feature>
<feature type="binding site" evidence="1">
    <location>
        <position position="46"/>
    </location>
    <ligand>
        <name>Zn(2+)</name>
        <dbReference type="ChEBI" id="CHEBI:29105"/>
        <label>2</label>
    </ligand>
</feature>
<feature type="binding site" evidence="1">
    <location>
        <position position="50"/>
    </location>
    <ligand>
        <name>Zn(2+)</name>
        <dbReference type="ChEBI" id="CHEBI:29105"/>
        <label>2</label>
    </ligand>
</feature>
<feature type="binding site" evidence="1">
    <location>
        <position position="185"/>
    </location>
    <ligand>
        <name>a protein</name>
        <dbReference type="ChEBI" id="CHEBI:16541"/>
    </ligand>
    <ligandPart>
        <name>N-terminal L-methionine residue</name>
        <dbReference type="ChEBI" id="CHEBI:64731"/>
    </ligandPart>
</feature>
<feature type="binding site" evidence="1">
    <location>
        <position position="202"/>
    </location>
    <ligand>
        <name>Zn(2+)</name>
        <dbReference type="ChEBI" id="CHEBI:29105"/>
        <label>3</label>
    </ligand>
</feature>
<feature type="binding site" evidence="1">
    <location>
        <position position="213"/>
    </location>
    <ligand>
        <name>Zn(2+)</name>
        <dbReference type="ChEBI" id="CHEBI:29105"/>
        <label>3</label>
    </ligand>
</feature>
<feature type="binding site" evidence="1">
    <location>
        <position position="213"/>
    </location>
    <ligand>
        <name>Zn(2+)</name>
        <dbReference type="ChEBI" id="CHEBI:29105"/>
        <label>4</label>
        <note>catalytic</note>
    </ligand>
</feature>
<feature type="binding site" evidence="1">
    <location>
        <position position="276"/>
    </location>
    <ligand>
        <name>Zn(2+)</name>
        <dbReference type="ChEBI" id="CHEBI:29105"/>
        <label>4</label>
        <note>catalytic</note>
    </ligand>
</feature>
<feature type="binding site" evidence="1">
    <location>
        <position position="283"/>
    </location>
    <ligand>
        <name>a protein</name>
        <dbReference type="ChEBI" id="CHEBI:16541"/>
    </ligand>
    <ligandPart>
        <name>N-terminal L-methionine residue</name>
        <dbReference type="ChEBI" id="CHEBI:64731"/>
    </ligandPart>
</feature>
<feature type="binding site" evidence="1">
    <location>
        <position position="309"/>
    </location>
    <ligand>
        <name>Zn(2+)</name>
        <dbReference type="ChEBI" id="CHEBI:29105"/>
        <label>4</label>
        <note>catalytic</note>
    </ligand>
</feature>
<feature type="binding site" evidence="1">
    <location>
        <position position="340"/>
    </location>
    <ligand>
        <name>Zn(2+)</name>
        <dbReference type="ChEBI" id="CHEBI:29105"/>
        <label>3</label>
    </ligand>
</feature>
<feature type="binding site" evidence="1">
    <location>
        <position position="340"/>
    </location>
    <ligand>
        <name>Zn(2+)</name>
        <dbReference type="ChEBI" id="CHEBI:29105"/>
        <label>4</label>
        <note>catalytic</note>
    </ligand>
</feature>
<gene>
    <name type="primary">metap1</name>
    <name type="ORF">DDB_G0279433</name>
</gene>
<evidence type="ECO:0000255" key="1">
    <source>
        <dbReference type="HAMAP-Rule" id="MF_03174"/>
    </source>
</evidence>
<evidence type="ECO:0000255" key="2">
    <source>
        <dbReference type="PROSITE-ProRule" id="PRU01357"/>
    </source>
</evidence>
<comment type="function">
    <text evidence="1">Cotranslationally removes the N-terminal methionine from nascent proteins. The N-terminal methionine is often cleaved when the second residue in the primary sequence is small and uncharged (Met-Ala-, Cys, Gly, Pro, Ser, Thr, or Val).</text>
</comment>
<comment type="catalytic activity">
    <reaction evidence="1">
        <text>Release of N-terminal amino acids, preferentially methionine, from peptides and arylamides.</text>
        <dbReference type="EC" id="3.4.11.18"/>
    </reaction>
</comment>
<comment type="cofactor">
    <cofactor evidence="1">
        <name>Zn(2+)</name>
        <dbReference type="ChEBI" id="CHEBI:29105"/>
    </cofactor>
    <cofactor evidence="1">
        <name>Co(2+)</name>
        <dbReference type="ChEBI" id="CHEBI:48828"/>
    </cofactor>
    <cofactor evidence="1">
        <name>Mn(2+)</name>
        <dbReference type="ChEBI" id="CHEBI:29035"/>
    </cofactor>
    <cofactor evidence="1">
        <name>Fe(2+)</name>
        <dbReference type="ChEBI" id="CHEBI:29033"/>
    </cofactor>
    <text evidence="1">Binds 2 divalent metal cations per subunit. Has a high-affinity and a low affinity metal-binding site. The true nature of the physiological cofactor is under debate. The enzyme is active with zinc, cobalt, manganese or divalent iron ions. Has high activity with zinc; zinc cofactor is transferred into the active site region by the ZNG1 zinc chaperone.</text>
</comment>
<comment type="subunit">
    <text evidence="1">Associates with the 60S ribosomal subunit of the 80S translational complex.</text>
</comment>
<comment type="subcellular location">
    <subcellularLocation>
        <location evidence="1">Cytoplasm</location>
    </subcellularLocation>
</comment>
<comment type="similarity">
    <text evidence="1">Belongs to the peptidase M24A family. Methionine aminopeptidase type 1 subfamily.</text>
</comment>
<dbReference type="EC" id="3.4.11.18" evidence="1"/>
<dbReference type="EMBL" id="AAFI02000031">
    <property type="protein sequence ID" value="EAL67655.1"/>
    <property type="molecule type" value="Genomic_DNA"/>
</dbReference>
<dbReference type="RefSeq" id="XP_641624.1">
    <property type="nucleotide sequence ID" value="XM_636532.1"/>
</dbReference>
<dbReference type="SMR" id="Q54WU3"/>
<dbReference type="FunCoup" id="Q54WU3">
    <property type="interactions" value="497"/>
</dbReference>
<dbReference type="STRING" id="44689.Q54WU3"/>
<dbReference type="MEROPS" id="M24.017"/>
<dbReference type="PaxDb" id="44689-DDB0235405"/>
<dbReference type="EnsemblProtists" id="EAL67655">
    <property type="protein sequence ID" value="EAL67655"/>
    <property type="gene ID" value="DDB_G0279433"/>
</dbReference>
<dbReference type="GeneID" id="8622030"/>
<dbReference type="KEGG" id="ddi:DDB_G0279433"/>
<dbReference type="dictyBase" id="DDB_G0279433">
    <property type="gene designation" value="metap1"/>
</dbReference>
<dbReference type="VEuPathDB" id="AmoebaDB:DDB_G0279433"/>
<dbReference type="eggNOG" id="KOG2738">
    <property type="taxonomic scope" value="Eukaryota"/>
</dbReference>
<dbReference type="HOGENOM" id="CLU_015857_2_1_1"/>
<dbReference type="InParanoid" id="Q54WU3"/>
<dbReference type="OMA" id="INQGTHQ"/>
<dbReference type="PhylomeDB" id="Q54WU3"/>
<dbReference type="Reactome" id="R-DDI-2514859">
    <property type="pathway name" value="Inactivation, recovery and regulation of the phototransduction cascade"/>
</dbReference>
<dbReference type="PRO" id="PR:Q54WU3"/>
<dbReference type="Proteomes" id="UP000002195">
    <property type="component" value="Chromosome 3"/>
</dbReference>
<dbReference type="GO" id="GO:0005829">
    <property type="term" value="C:cytosol"/>
    <property type="evidence" value="ECO:0000318"/>
    <property type="project" value="GO_Central"/>
</dbReference>
<dbReference type="GO" id="GO:0022626">
    <property type="term" value="C:cytosolic ribosome"/>
    <property type="evidence" value="ECO:0007669"/>
    <property type="project" value="UniProtKB-UniRule"/>
</dbReference>
<dbReference type="GO" id="GO:0004239">
    <property type="term" value="F:initiator methionyl aminopeptidase activity"/>
    <property type="evidence" value="ECO:0007669"/>
    <property type="project" value="UniProtKB-UniRule"/>
</dbReference>
<dbReference type="GO" id="GO:0070006">
    <property type="term" value="F:metalloaminopeptidase activity"/>
    <property type="evidence" value="ECO:0000318"/>
    <property type="project" value="GO_Central"/>
</dbReference>
<dbReference type="GO" id="GO:0008270">
    <property type="term" value="F:zinc ion binding"/>
    <property type="evidence" value="ECO:0007669"/>
    <property type="project" value="UniProtKB-KW"/>
</dbReference>
<dbReference type="GO" id="GO:0006508">
    <property type="term" value="P:proteolysis"/>
    <property type="evidence" value="ECO:0007669"/>
    <property type="project" value="UniProtKB-KW"/>
</dbReference>
<dbReference type="CDD" id="cd01086">
    <property type="entry name" value="MetAP1"/>
    <property type="match status" value="1"/>
</dbReference>
<dbReference type="Gene3D" id="3.90.230.10">
    <property type="entry name" value="Creatinase/methionine aminopeptidase superfamily"/>
    <property type="match status" value="1"/>
</dbReference>
<dbReference type="HAMAP" id="MF_01974">
    <property type="entry name" value="MetAP_1"/>
    <property type="match status" value="1"/>
</dbReference>
<dbReference type="InterPro" id="IPR036005">
    <property type="entry name" value="Creatinase/aminopeptidase-like"/>
</dbReference>
<dbReference type="InterPro" id="IPR000994">
    <property type="entry name" value="Pept_M24"/>
</dbReference>
<dbReference type="InterPro" id="IPR001714">
    <property type="entry name" value="Pept_M24_MAP"/>
</dbReference>
<dbReference type="InterPro" id="IPR002467">
    <property type="entry name" value="Pept_M24A_MAP1"/>
</dbReference>
<dbReference type="InterPro" id="IPR031615">
    <property type="entry name" value="Zfn-C6H2"/>
</dbReference>
<dbReference type="NCBIfam" id="TIGR00500">
    <property type="entry name" value="met_pdase_I"/>
    <property type="match status" value="1"/>
</dbReference>
<dbReference type="PANTHER" id="PTHR43330">
    <property type="entry name" value="METHIONINE AMINOPEPTIDASE"/>
    <property type="match status" value="1"/>
</dbReference>
<dbReference type="PANTHER" id="PTHR43330:SF7">
    <property type="entry name" value="METHIONINE AMINOPEPTIDASE 1"/>
    <property type="match status" value="1"/>
</dbReference>
<dbReference type="Pfam" id="PF00557">
    <property type="entry name" value="Peptidase_M24"/>
    <property type="match status" value="1"/>
</dbReference>
<dbReference type="Pfam" id="PF15801">
    <property type="entry name" value="zf-C6H2"/>
    <property type="match status" value="1"/>
</dbReference>
<dbReference type="PRINTS" id="PR00599">
    <property type="entry name" value="MAPEPTIDASE"/>
</dbReference>
<dbReference type="SUPFAM" id="SSF55920">
    <property type="entry name" value="Creatinase/aminopeptidase"/>
    <property type="match status" value="1"/>
</dbReference>
<dbReference type="PROSITE" id="PS00680">
    <property type="entry name" value="MAP_1"/>
    <property type="match status" value="1"/>
</dbReference>
<dbReference type="PROSITE" id="PS52013">
    <property type="entry name" value="ZF_C6H2"/>
    <property type="match status" value="1"/>
</dbReference>